<keyword id="KW-1185">Reference proteome</keyword>
<keyword id="KW-0687">Ribonucleoprotein</keyword>
<keyword id="KW-0689">Ribosomal protein</keyword>
<comment type="similarity">
    <text evidence="1">Belongs to the bacterial ribosomal protein bL33 family.</text>
</comment>
<protein>
    <recommendedName>
        <fullName evidence="1">Large ribosomal subunit protein bL33</fullName>
    </recommendedName>
    <alternativeName>
        <fullName evidence="2">50S ribosomal protein L33</fullName>
    </alternativeName>
</protein>
<reference key="1">
    <citation type="journal article" date="2002" name="Genome Res.">
        <title>A complete sequence of the T. tengcongensis genome.</title>
        <authorList>
            <person name="Bao Q."/>
            <person name="Tian Y."/>
            <person name="Li W."/>
            <person name="Xu Z."/>
            <person name="Xuan Z."/>
            <person name="Hu S."/>
            <person name="Dong W."/>
            <person name="Yang J."/>
            <person name="Chen Y."/>
            <person name="Xue Y."/>
            <person name="Xu Y."/>
            <person name="Lai X."/>
            <person name="Huang L."/>
            <person name="Dong X."/>
            <person name="Ma Y."/>
            <person name="Ling L."/>
            <person name="Tan H."/>
            <person name="Chen R."/>
            <person name="Wang J."/>
            <person name="Yu J."/>
            <person name="Yang H."/>
        </authorList>
    </citation>
    <scope>NUCLEOTIDE SEQUENCE [LARGE SCALE GENOMIC DNA]</scope>
    <source>
        <strain>DSM 15242 / JCM 11007 / NBRC 100824 / MB4</strain>
    </source>
</reference>
<dbReference type="EMBL" id="AE008691">
    <property type="protein sequence ID" value="AAM25450.1"/>
    <property type="molecule type" value="Genomic_DNA"/>
</dbReference>
<dbReference type="RefSeq" id="WP_011026353.1">
    <property type="nucleotide sequence ID" value="NC_003869.1"/>
</dbReference>
<dbReference type="SMR" id="Q8R7T9"/>
<dbReference type="STRING" id="273068.TTE2309"/>
<dbReference type="KEGG" id="tte:TTE2309"/>
<dbReference type="eggNOG" id="COG0267">
    <property type="taxonomic scope" value="Bacteria"/>
</dbReference>
<dbReference type="HOGENOM" id="CLU_190949_0_2_9"/>
<dbReference type="OrthoDB" id="9801333at2"/>
<dbReference type="Proteomes" id="UP000000555">
    <property type="component" value="Chromosome"/>
</dbReference>
<dbReference type="GO" id="GO:0005737">
    <property type="term" value="C:cytoplasm"/>
    <property type="evidence" value="ECO:0007669"/>
    <property type="project" value="UniProtKB-ARBA"/>
</dbReference>
<dbReference type="GO" id="GO:1990904">
    <property type="term" value="C:ribonucleoprotein complex"/>
    <property type="evidence" value="ECO:0007669"/>
    <property type="project" value="UniProtKB-KW"/>
</dbReference>
<dbReference type="GO" id="GO:0005840">
    <property type="term" value="C:ribosome"/>
    <property type="evidence" value="ECO:0007669"/>
    <property type="project" value="UniProtKB-KW"/>
</dbReference>
<dbReference type="GO" id="GO:0003735">
    <property type="term" value="F:structural constituent of ribosome"/>
    <property type="evidence" value="ECO:0007669"/>
    <property type="project" value="InterPro"/>
</dbReference>
<dbReference type="GO" id="GO:0006412">
    <property type="term" value="P:translation"/>
    <property type="evidence" value="ECO:0007669"/>
    <property type="project" value="UniProtKB-UniRule"/>
</dbReference>
<dbReference type="Gene3D" id="2.20.28.120">
    <property type="entry name" value="Ribosomal protein L33"/>
    <property type="match status" value="1"/>
</dbReference>
<dbReference type="HAMAP" id="MF_00294">
    <property type="entry name" value="Ribosomal_bL33"/>
    <property type="match status" value="1"/>
</dbReference>
<dbReference type="InterPro" id="IPR001705">
    <property type="entry name" value="Ribosomal_bL33"/>
</dbReference>
<dbReference type="InterPro" id="IPR018264">
    <property type="entry name" value="Ribosomal_bL33_CS"/>
</dbReference>
<dbReference type="InterPro" id="IPR038584">
    <property type="entry name" value="Ribosomal_bL33_sf"/>
</dbReference>
<dbReference type="InterPro" id="IPR011332">
    <property type="entry name" value="Ribosomal_zn-bd"/>
</dbReference>
<dbReference type="NCBIfam" id="NF001764">
    <property type="entry name" value="PRK00504.1"/>
    <property type="match status" value="1"/>
</dbReference>
<dbReference type="NCBIfam" id="NF001860">
    <property type="entry name" value="PRK00595.1"/>
    <property type="match status" value="1"/>
</dbReference>
<dbReference type="NCBIfam" id="TIGR01023">
    <property type="entry name" value="rpmG_bact"/>
    <property type="match status" value="1"/>
</dbReference>
<dbReference type="PANTHER" id="PTHR43168">
    <property type="entry name" value="50S RIBOSOMAL PROTEIN L33, CHLOROPLASTIC"/>
    <property type="match status" value="1"/>
</dbReference>
<dbReference type="PANTHER" id="PTHR43168:SF2">
    <property type="entry name" value="LARGE RIBOSOMAL SUBUNIT PROTEIN BL33C"/>
    <property type="match status" value="1"/>
</dbReference>
<dbReference type="Pfam" id="PF00471">
    <property type="entry name" value="Ribosomal_L33"/>
    <property type="match status" value="1"/>
</dbReference>
<dbReference type="SUPFAM" id="SSF57829">
    <property type="entry name" value="Zn-binding ribosomal proteins"/>
    <property type="match status" value="1"/>
</dbReference>
<dbReference type="PROSITE" id="PS00582">
    <property type="entry name" value="RIBOSOMAL_L33"/>
    <property type="match status" value="1"/>
</dbReference>
<evidence type="ECO:0000255" key="1">
    <source>
        <dbReference type="HAMAP-Rule" id="MF_00294"/>
    </source>
</evidence>
<evidence type="ECO:0000305" key="2"/>
<accession>Q8R7T9</accession>
<name>RL33_CALS4</name>
<gene>
    <name evidence="1" type="primary">rpmG</name>
    <name type="ordered locus">TTE2309</name>
</gene>
<organism>
    <name type="scientific">Caldanaerobacter subterraneus subsp. tengcongensis (strain DSM 15242 / JCM 11007 / NBRC 100824 / MB4)</name>
    <name type="common">Thermoanaerobacter tengcongensis</name>
    <dbReference type="NCBI Taxonomy" id="273068"/>
    <lineage>
        <taxon>Bacteria</taxon>
        <taxon>Bacillati</taxon>
        <taxon>Bacillota</taxon>
        <taxon>Clostridia</taxon>
        <taxon>Thermoanaerobacterales</taxon>
        <taxon>Thermoanaerobacteraceae</taxon>
        <taxon>Caldanaerobacter</taxon>
    </lineage>
</organism>
<sequence length="49" mass="5983">MRVKIALVCTECKNRNYHTTKNKKNDPDRLELKKYCKHCKKHTLHRETK</sequence>
<feature type="chain" id="PRO_0000170258" description="Large ribosomal subunit protein bL33">
    <location>
        <begin position="1"/>
        <end position="49"/>
    </location>
</feature>
<proteinExistence type="inferred from homology"/>